<gene>
    <name evidence="1" type="primary">rplS</name>
    <name type="ordered locus">Saro_1408</name>
</gene>
<evidence type="ECO:0000255" key="1">
    <source>
        <dbReference type="HAMAP-Rule" id="MF_00402"/>
    </source>
</evidence>
<evidence type="ECO:0000305" key="2"/>
<dbReference type="EMBL" id="CP000248">
    <property type="protein sequence ID" value="ABD25852.1"/>
    <property type="molecule type" value="Genomic_DNA"/>
</dbReference>
<dbReference type="RefSeq" id="WP_011445066.1">
    <property type="nucleotide sequence ID" value="NC_007794.1"/>
</dbReference>
<dbReference type="SMR" id="Q2G8H1"/>
<dbReference type="STRING" id="279238.Saro_1408"/>
<dbReference type="KEGG" id="nar:Saro_1408"/>
<dbReference type="eggNOG" id="COG0335">
    <property type="taxonomic scope" value="Bacteria"/>
</dbReference>
<dbReference type="HOGENOM" id="CLU_103507_2_2_5"/>
<dbReference type="Proteomes" id="UP000009134">
    <property type="component" value="Chromosome"/>
</dbReference>
<dbReference type="GO" id="GO:0022625">
    <property type="term" value="C:cytosolic large ribosomal subunit"/>
    <property type="evidence" value="ECO:0007669"/>
    <property type="project" value="TreeGrafter"/>
</dbReference>
<dbReference type="GO" id="GO:0003735">
    <property type="term" value="F:structural constituent of ribosome"/>
    <property type="evidence" value="ECO:0007669"/>
    <property type="project" value="InterPro"/>
</dbReference>
<dbReference type="GO" id="GO:0006412">
    <property type="term" value="P:translation"/>
    <property type="evidence" value="ECO:0007669"/>
    <property type="project" value="UniProtKB-UniRule"/>
</dbReference>
<dbReference type="FunFam" id="2.30.30.790:FF:000001">
    <property type="entry name" value="50S ribosomal protein L19"/>
    <property type="match status" value="1"/>
</dbReference>
<dbReference type="Gene3D" id="2.30.30.790">
    <property type="match status" value="1"/>
</dbReference>
<dbReference type="HAMAP" id="MF_00402">
    <property type="entry name" value="Ribosomal_bL19"/>
    <property type="match status" value="1"/>
</dbReference>
<dbReference type="InterPro" id="IPR001857">
    <property type="entry name" value="Ribosomal_bL19"/>
</dbReference>
<dbReference type="InterPro" id="IPR018257">
    <property type="entry name" value="Ribosomal_bL19_CS"/>
</dbReference>
<dbReference type="InterPro" id="IPR038657">
    <property type="entry name" value="Ribosomal_bL19_sf"/>
</dbReference>
<dbReference type="InterPro" id="IPR008991">
    <property type="entry name" value="Translation_prot_SH3-like_sf"/>
</dbReference>
<dbReference type="NCBIfam" id="TIGR01024">
    <property type="entry name" value="rplS_bact"/>
    <property type="match status" value="1"/>
</dbReference>
<dbReference type="PANTHER" id="PTHR15680:SF9">
    <property type="entry name" value="LARGE RIBOSOMAL SUBUNIT PROTEIN BL19M"/>
    <property type="match status" value="1"/>
</dbReference>
<dbReference type="PANTHER" id="PTHR15680">
    <property type="entry name" value="RIBOSOMAL PROTEIN L19"/>
    <property type="match status" value="1"/>
</dbReference>
<dbReference type="Pfam" id="PF01245">
    <property type="entry name" value="Ribosomal_L19"/>
    <property type="match status" value="1"/>
</dbReference>
<dbReference type="PIRSF" id="PIRSF002191">
    <property type="entry name" value="Ribosomal_L19"/>
    <property type="match status" value="1"/>
</dbReference>
<dbReference type="PRINTS" id="PR00061">
    <property type="entry name" value="RIBOSOMALL19"/>
</dbReference>
<dbReference type="SUPFAM" id="SSF50104">
    <property type="entry name" value="Translation proteins SH3-like domain"/>
    <property type="match status" value="1"/>
</dbReference>
<dbReference type="PROSITE" id="PS01015">
    <property type="entry name" value="RIBOSOMAL_L19"/>
    <property type="match status" value="1"/>
</dbReference>
<comment type="function">
    <text evidence="1">This protein is located at the 30S-50S ribosomal subunit interface and may play a role in the structure and function of the aminoacyl-tRNA binding site.</text>
</comment>
<comment type="similarity">
    <text evidence="1">Belongs to the bacterial ribosomal protein bL19 family.</text>
</comment>
<reference key="1">
    <citation type="submission" date="2006-01" db="EMBL/GenBank/DDBJ databases">
        <title>Complete sequence of Novosphingobium aromaticivorans DSM 12444.</title>
        <authorList>
            <consortium name="US DOE Joint Genome Institute"/>
            <person name="Copeland A."/>
            <person name="Lucas S."/>
            <person name="Lapidus A."/>
            <person name="Barry K."/>
            <person name="Detter J.C."/>
            <person name="Glavina T."/>
            <person name="Hammon N."/>
            <person name="Israni S."/>
            <person name="Pitluck S."/>
            <person name="Chain P."/>
            <person name="Malfatti S."/>
            <person name="Shin M."/>
            <person name="Vergez L."/>
            <person name="Schmutz J."/>
            <person name="Larimer F."/>
            <person name="Land M."/>
            <person name="Kyrpides N."/>
            <person name="Ivanova N."/>
            <person name="Fredrickson J."/>
            <person name="Balkwill D."/>
            <person name="Romine M.F."/>
            <person name="Richardson P."/>
        </authorList>
    </citation>
    <scope>NUCLEOTIDE SEQUENCE [LARGE SCALE GENOMIC DNA]</scope>
    <source>
        <strain>ATCC 700278 / DSM 12444 / CCUG 56034 / CIP 105152 / NBRC 16084 / F199</strain>
    </source>
</reference>
<proteinExistence type="inferred from homology"/>
<sequence>MNLIQQLEAEAIAEFKAKKEIPDFRAGDTVRVGVRVVEGERTRVQAYEGVCIARSNRGLGSNFTVRKISFGEGVERVFPLYSPNIDSITVVRRGVVRRAKLYYLRGRTGKSARIAERKVTKA</sequence>
<protein>
    <recommendedName>
        <fullName evidence="1">Large ribosomal subunit protein bL19</fullName>
    </recommendedName>
    <alternativeName>
        <fullName evidence="2">50S ribosomal protein L19</fullName>
    </alternativeName>
</protein>
<accession>Q2G8H1</accession>
<feature type="chain" id="PRO_0000252525" description="Large ribosomal subunit protein bL19">
    <location>
        <begin position="1"/>
        <end position="122"/>
    </location>
</feature>
<organism>
    <name type="scientific">Novosphingobium aromaticivorans (strain ATCC 700278 / DSM 12444 / CCUG 56034 / CIP 105152 / NBRC 16084 / F199)</name>
    <dbReference type="NCBI Taxonomy" id="279238"/>
    <lineage>
        <taxon>Bacteria</taxon>
        <taxon>Pseudomonadati</taxon>
        <taxon>Pseudomonadota</taxon>
        <taxon>Alphaproteobacteria</taxon>
        <taxon>Sphingomonadales</taxon>
        <taxon>Sphingomonadaceae</taxon>
        <taxon>Novosphingobium</taxon>
    </lineage>
</organism>
<keyword id="KW-1185">Reference proteome</keyword>
<keyword id="KW-0687">Ribonucleoprotein</keyword>
<keyword id="KW-0689">Ribosomal protein</keyword>
<name>RL19_NOVAD</name>